<protein>
    <recommendedName>
        <fullName evidence="3">Phycoerythrin beta subunit</fullName>
    </recommendedName>
    <alternativeName>
        <fullName evidence="2">Phycoerythrin PE555 beta subunit</fullName>
    </alternativeName>
</protein>
<keyword id="KW-0002">3D-structure</keyword>
<keyword id="KW-0089">Bile pigment</keyword>
<keyword id="KW-0150">Chloroplast</keyword>
<keyword id="KW-0157">Chromophore</keyword>
<keyword id="KW-0249">Electron transport</keyword>
<keyword id="KW-0472">Membrane</keyword>
<keyword id="KW-0602">Photosynthesis</keyword>
<keyword id="KW-0934">Plastid</keyword>
<keyword id="KW-0793">Thylakoid</keyword>
<keyword id="KW-0813">Transport</keyword>
<proteinExistence type="evidence at protein level"/>
<accession>U5T8W0</accession>
<name>PHEB_HEMAN</name>
<sequence>MLDAFSKVITSADGKAAYVGGADLQALKKFVSEGNKRMDSVNAIVSNASCIVSDSVSGMVCENPSLIAPNGGVYTNRKMAACLRDAEIILRYVSYSLLSGDSSVLEDRCLNGLKETYASLGVPAAGNARTISIMKATVIGFITNNSQQKKLSTPAGDCSALASEVGGYFDKVSSALA</sequence>
<comment type="function">
    <text evidence="3">Light-harvesting photosynthetic bile pigment-protein from the phycobiliprotein complex.</text>
</comment>
<comment type="subunit">
    <text evidence="1">Heterotetramer of 2 different alpha chains and 2 identical beta chains which form 2 alpha-beta heterodimers within the heterotetramer. The two alpha-beta heterodimers are rotated to an open configuration in contrast to the closed configuration found in other cryptophyte species due to the insertion of a single amino acid, 'Asp-65', in a conserved region of the alpha chain. In the open form, the central chromophores are not in physical contact but are separated by a water-filled channel.</text>
</comment>
<comment type="subcellular location">
    <subcellularLocation>
        <location evidence="3">Plastid</location>
        <location evidence="3">Chloroplast thylakoid membrane</location>
        <topology evidence="3">Peripheral membrane protein</topology>
        <orientation evidence="3">Lumenal side</orientation>
    </subcellularLocation>
</comment>
<comment type="PTM">
    <text evidence="1">Contains three phycoerythrobilin chromophores and one 15,16-dihydrobiliverdin chromophore with binding of the phycoerythrobilin chromophores mediated by both the alpha and beta subunits.</text>
</comment>
<comment type="miscellaneous">
    <text evidence="3">The light-harvesting system in Cryptophytes contains phycobiliprotein complexes. Unusually they are composed of either phycoerythrin (CPE) or phycocyanin (CPC) but never allophycocyanin (APC), with only one type of biliprotein being present in any one species. Unlike cyanobacteria or red algae these proteins are not arranged into higher-order phycobilisome complexes, and they are found in the thylakoid lumen.</text>
</comment>
<comment type="similarity">
    <text evidence="3">Belongs to the phycobiliprotein family.</text>
</comment>
<geneLocation type="chloroplast" evidence="4"/>
<reference evidence="4 5" key="1">
    <citation type="journal article" date="2014" name="Proc. Natl. Acad. Sci. U.S.A.">
        <title>Single-residue insertion switches the quaternary structure and exciton states of cryptophyte light-harvesting proteins.</title>
        <authorList>
            <person name="Harrop S.J."/>
            <person name="Wilk K.E."/>
            <person name="Dinshaw R."/>
            <person name="Collini E."/>
            <person name="Mirkovic T."/>
            <person name="Teng C.Y."/>
            <person name="Oblinsky D.G."/>
            <person name="Green B.R."/>
            <person name="Hoef-Emden K."/>
            <person name="Hiller R.G."/>
            <person name="Scholes G.D."/>
            <person name="Curmi P.M."/>
        </authorList>
    </citation>
    <scope>NUCLEOTIDE SEQUENCE [MRNA]</scope>
    <scope>X-RAY CRYSTALLOGRAPHY (1.80 ANGSTROMS) IN COMPLEX WITH 15,16-DIHYDROBILIVERDIN AND PHYCOERYTHROBILIN</scope>
    <scope>SUBUNIT</scope>
    <source>
        <strain evidence="4">CCMP644</strain>
    </source>
</reference>
<evidence type="ECO:0000269" key="1">
    <source>
    </source>
</evidence>
<evidence type="ECO:0000303" key="2">
    <source>
    </source>
</evidence>
<evidence type="ECO:0000305" key="3"/>
<evidence type="ECO:0000312" key="4">
    <source>
        <dbReference type="EMBL" id="AGY96987.1"/>
    </source>
</evidence>
<evidence type="ECO:0007744" key="5">
    <source>
        <dbReference type="PDB" id="4LMX"/>
    </source>
</evidence>
<evidence type="ECO:0007829" key="6">
    <source>
        <dbReference type="PDB" id="7SSF"/>
    </source>
</evidence>
<feature type="chain" id="PRO_0000455438" description="Phycoerythrin beta subunit">
    <location>
        <begin position="1"/>
        <end position="177"/>
    </location>
</feature>
<feature type="binding site" evidence="1 5">
    <location>
        <position position="18"/>
    </location>
    <ligand>
        <name>(2R,3E)-phycoerythrobilin</name>
        <dbReference type="ChEBI" id="CHEBI:85276"/>
        <label>1</label>
        <note>ligand shared with alpha subunit</note>
    </ligand>
</feature>
<feature type="binding site" evidence="1 5">
    <location>
        <position position="28"/>
    </location>
    <ligand>
        <name>(2R,3E)-phycoerythrobilin</name>
        <dbReference type="ChEBI" id="CHEBI:85276"/>
        <label>2</label>
        <note>ligand shared with alpha subunit</note>
    </ligand>
</feature>
<feature type="binding site" evidence="1 5">
    <location>
        <position position="35"/>
    </location>
    <ligand>
        <name>(2R,3E)-phycoerythrobilin</name>
        <dbReference type="ChEBI" id="CHEBI:85276"/>
        <label>2</label>
        <note>ligand shared with alpha subunit</note>
    </ligand>
</feature>
<feature type="binding site" evidence="1 5">
    <location>
        <position position="39"/>
    </location>
    <ligand>
        <name>(2R,3E)-phycoerythrobilin</name>
        <dbReference type="ChEBI" id="CHEBI:85276"/>
        <label>2</label>
        <note>ligand shared with alpha subunit</note>
    </ligand>
</feature>
<feature type="binding site" description="covalent" evidence="1 5">
    <location>
        <position position="50"/>
    </location>
    <ligand>
        <name>15,16-dihydrobiliverdin</name>
        <dbReference type="ChEBI" id="CHEBI:57899"/>
    </ligand>
</feature>
<feature type="binding site" evidence="1 5">
    <location>
        <position position="54"/>
    </location>
    <ligand>
        <name>15,16-dihydrobiliverdin</name>
        <dbReference type="ChEBI" id="CHEBI:57899"/>
    </ligand>
</feature>
<feature type="binding site" description="covalent" evidence="1 5">
    <location>
        <position position="61"/>
    </location>
    <ligand>
        <name>15,16-dihydrobiliverdin</name>
        <dbReference type="ChEBI" id="CHEBI:57899"/>
    </ligand>
</feature>
<feature type="binding site" description="covalent" evidence="1 5">
    <location>
        <position position="82"/>
    </location>
    <ligand>
        <name>(2R,3E)-phycoerythrobilin</name>
        <dbReference type="ChEBI" id="CHEBI:85276"/>
        <label>3</label>
        <note>ligand shared with alpha subunit</note>
    </ligand>
</feature>
<feature type="binding site" evidence="1 5">
    <location>
        <position position="84"/>
    </location>
    <ligand>
        <name>(2R,3E)-phycoerythrobilin</name>
        <dbReference type="ChEBI" id="CHEBI:85276"/>
        <label>3</label>
        <note>ligand shared with alpha subunit</note>
    </ligand>
</feature>
<feature type="binding site" evidence="1 5">
    <location>
        <position position="85"/>
    </location>
    <ligand>
        <name>(2R,3E)-phycoerythrobilin</name>
        <dbReference type="ChEBI" id="CHEBI:85276"/>
        <label>3</label>
        <note>ligand shared with alpha subunit</note>
    </ligand>
</feature>
<feature type="binding site" evidence="1 5">
    <location>
        <position position="129"/>
    </location>
    <ligand>
        <name>15,16-dihydrobiliverdin</name>
        <dbReference type="ChEBI" id="CHEBI:57899"/>
    </ligand>
</feature>
<feature type="binding site" evidence="1 5">
    <location>
        <position position="144"/>
    </location>
    <ligand>
        <name>(2R,3E)-phycoerythrobilin</name>
        <dbReference type="ChEBI" id="CHEBI:85276"/>
        <label>2</label>
        <note>ligand shared with alpha subunit</note>
    </ligand>
</feature>
<feature type="binding site" evidence="1 5">
    <location>
        <position position="148"/>
    </location>
    <ligand>
        <name>15,16-dihydrobiliverdin</name>
        <dbReference type="ChEBI" id="CHEBI:57899"/>
    </ligand>
</feature>
<feature type="binding site" evidence="1 5">
    <location>
        <position position="149"/>
    </location>
    <ligand>
        <name>15,16-dihydrobiliverdin</name>
        <dbReference type="ChEBI" id="CHEBI:57899"/>
    </ligand>
</feature>
<feature type="binding site" evidence="1 5">
    <location>
        <position position="154"/>
    </location>
    <ligand>
        <name>(2R,3E)-phycoerythrobilin</name>
        <dbReference type="ChEBI" id="CHEBI:85276"/>
        <label>2</label>
        <note>ligand shared with alpha subunit</note>
    </ligand>
</feature>
<feature type="binding site" evidence="1 5">
    <location>
        <position position="156"/>
    </location>
    <ligand>
        <name>(2R,3E)-phycoerythrobilin</name>
        <dbReference type="ChEBI" id="CHEBI:85276"/>
        <label>2</label>
        <note>ligand shared with alpha subunit</note>
    </ligand>
</feature>
<feature type="binding site" description="covalent" evidence="1 5">
    <location>
        <position position="158"/>
    </location>
    <ligand>
        <name>(2R,3E)-phycoerythrobilin</name>
        <dbReference type="ChEBI" id="CHEBI:85276"/>
        <label>2</label>
        <note>ligand shared with alpha subunit</note>
    </ligand>
</feature>
<feature type="sequence conflict" description="In Ref. 1; AGY96987." evidence="3" ref="1">
    <original>V</original>
    <variation>E</variation>
    <location>
        <position position="172"/>
    </location>
</feature>
<feature type="helix" evidence="6">
    <location>
        <begin position="4"/>
        <end position="10"/>
    </location>
</feature>
<feature type="strand" evidence="6">
    <location>
        <begin position="11"/>
        <end position="13"/>
    </location>
</feature>
<feature type="strand" evidence="6">
    <location>
        <begin position="17"/>
        <end position="20"/>
    </location>
</feature>
<feature type="helix" evidence="6">
    <location>
        <begin position="21"/>
        <end position="28"/>
    </location>
</feature>
<feature type="helix" evidence="6">
    <location>
        <begin position="34"/>
        <end position="45"/>
    </location>
</feature>
<feature type="helix" evidence="6">
    <location>
        <begin position="48"/>
        <end position="62"/>
    </location>
</feature>
<feature type="helix" evidence="6">
    <location>
        <begin position="64"/>
        <end position="67"/>
    </location>
</feature>
<feature type="helix" evidence="6">
    <location>
        <begin position="76"/>
        <end position="99"/>
    </location>
</feature>
<feature type="helix" evidence="6">
    <location>
        <begin position="103"/>
        <end position="108"/>
    </location>
</feature>
<feature type="turn" evidence="6">
    <location>
        <begin position="109"/>
        <end position="112"/>
    </location>
</feature>
<feature type="helix" evidence="6">
    <location>
        <begin position="113"/>
        <end position="120"/>
    </location>
</feature>
<feature type="helix" evidence="6">
    <location>
        <begin position="124"/>
        <end position="142"/>
    </location>
</feature>
<feature type="helix" evidence="6">
    <location>
        <begin position="159"/>
        <end position="176"/>
    </location>
</feature>
<organism evidence="4">
    <name type="scientific">Hemiselmis andersenii</name>
    <name type="common">Cryptophyte alga</name>
    <dbReference type="NCBI Taxonomy" id="464988"/>
    <lineage>
        <taxon>Eukaryota</taxon>
        <taxon>Cryptophyceae</taxon>
        <taxon>Cryptomonadales</taxon>
        <taxon>Hemiselmidaceae</taxon>
        <taxon>Hemiselmis</taxon>
    </lineage>
</organism>
<dbReference type="EMBL" id="KF314690">
    <property type="protein sequence ID" value="AGY96987.1"/>
    <property type="molecule type" value="mRNA"/>
</dbReference>
<dbReference type="PDB" id="4LMX">
    <property type="method" value="X-ray"/>
    <property type="resolution" value="1.80 A"/>
    <property type="chains" value="B/D/F/H/J/L=1-177"/>
</dbReference>
<dbReference type="PDB" id="7SSF">
    <property type="method" value="X-ray"/>
    <property type="resolution" value="1.45 A"/>
    <property type="chains" value="B/D/F/H=1-177"/>
</dbReference>
<dbReference type="PDB" id="7SUT">
    <property type="method" value="X-ray"/>
    <property type="resolution" value="1.49 A"/>
    <property type="chains" value="B/D/F/H=1-177"/>
</dbReference>
<dbReference type="PDB" id="8EL3">
    <property type="method" value="X-ray"/>
    <property type="resolution" value="1.57 A"/>
    <property type="chains" value="B/D/F/H=1-177"/>
</dbReference>
<dbReference type="PDB" id="8EL4">
    <property type="method" value="X-ray"/>
    <property type="resolution" value="1.73 A"/>
    <property type="chains" value="B/D=1-177"/>
</dbReference>
<dbReference type="PDB" id="8EL5">
    <property type="method" value="X-ray"/>
    <property type="resolution" value="1.67 A"/>
    <property type="chains" value="B/D/F/H=1-177"/>
</dbReference>
<dbReference type="PDB" id="8EL6">
    <property type="method" value="X-ray"/>
    <property type="resolution" value="1.95 A"/>
    <property type="chains" value="B/D=1-177"/>
</dbReference>
<dbReference type="PDBsum" id="4LMX"/>
<dbReference type="PDBsum" id="7SSF"/>
<dbReference type="PDBsum" id="7SUT"/>
<dbReference type="PDBsum" id="8EL3"/>
<dbReference type="PDBsum" id="8EL4"/>
<dbReference type="PDBsum" id="8EL5"/>
<dbReference type="PDBsum" id="8EL6"/>
<dbReference type="SMR" id="U5T8W0"/>
<dbReference type="EvolutionaryTrace" id="U5T8W0"/>
<dbReference type="GO" id="GO:0009535">
    <property type="term" value="C:chloroplast thylakoid membrane"/>
    <property type="evidence" value="ECO:0007669"/>
    <property type="project" value="UniProtKB-SubCell"/>
</dbReference>
<dbReference type="GO" id="GO:0030089">
    <property type="term" value="C:phycobilisome"/>
    <property type="evidence" value="ECO:0007669"/>
    <property type="project" value="InterPro"/>
</dbReference>
<dbReference type="GO" id="GO:0015979">
    <property type="term" value="P:photosynthesis"/>
    <property type="evidence" value="ECO:0007669"/>
    <property type="project" value="UniProtKB-KW"/>
</dbReference>
<dbReference type="Gene3D" id="1.10.490.20">
    <property type="entry name" value="Phycocyanins"/>
    <property type="match status" value="1"/>
</dbReference>
<dbReference type="InterPro" id="IPR009050">
    <property type="entry name" value="Globin-like_sf"/>
</dbReference>
<dbReference type="InterPro" id="IPR012128">
    <property type="entry name" value="Phycobilisome_asu/bsu"/>
</dbReference>
<dbReference type="InterPro" id="IPR038719">
    <property type="entry name" value="Phycobilisome_asu/bsu_sf"/>
</dbReference>
<dbReference type="PANTHER" id="PTHR34011:SF7">
    <property type="entry name" value="C-PHYCOCYANIN BETA SUBUNIT"/>
    <property type="match status" value="1"/>
</dbReference>
<dbReference type="PANTHER" id="PTHR34011">
    <property type="entry name" value="PHYCOBILISOME 32.1 KDA LINKER POLYPEPTIDE, PHYCOCYANIN-ASSOCIATED, ROD 2-RELATED"/>
    <property type="match status" value="1"/>
</dbReference>
<dbReference type="Pfam" id="PF00502">
    <property type="entry name" value="Phycobilisome"/>
    <property type="match status" value="1"/>
</dbReference>
<dbReference type="PIRSF" id="PIRSF000081">
    <property type="entry name" value="Phycocyanin"/>
    <property type="match status" value="1"/>
</dbReference>
<dbReference type="SUPFAM" id="SSF46458">
    <property type="entry name" value="Globin-like"/>
    <property type="match status" value="1"/>
</dbReference>